<feature type="chain" id="PRO_1000088388" description="RNA polymerase-associated protein RapA">
    <location>
        <begin position="1"/>
        <end position="968"/>
    </location>
</feature>
<feature type="domain" description="Helicase ATP-binding" evidence="1">
    <location>
        <begin position="163"/>
        <end position="332"/>
    </location>
</feature>
<feature type="domain" description="Helicase C-terminal" evidence="1">
    <location>
        <begin position="491"/>
        <end position="641"/>
    </location>
</feature>
<feature type="short sequence motif" description="DEAH box">
    <location>
        <begin position="278"/>
        <end position="281"/>
    </location>
</feature>
<feature type="binding site" evidence="1">
    <location>
        <begin position="176"/>
        <end position="183"/>
    </location>
    <ligand>
        <name>ATP</name>
        <dbReference type="ChEBI" id="CHEBI:30616"/>
    </ligand>
</feature>
<reference key="1">
    <citation type="submission" date="2007-08" db="EMBL/GenBank/DDBJ databases">
        <title>Complete sequence of Shewanella sediminis HAW-EB3.</title>
        <authorList>
            <consortium name="US DOE Joint Genome Institute"/>
            <person name="Copeland A."/>
            <person name="Lucas S."/>
            <person name="Lapidus A."/>
            <person name="Barry K."/>
            <person name="Glavina del Rio T."/>
            <person name="Dalin E."/>
            <person name="Tice H."/>
            <person name="Pitluck S."/>
            <person name="Chertkov O."/>
            <person name="Brettin T."/>
            <person name="Bruce D."/>
            <person name="Detter J.C."/>
            <person name="Han C."/>
            <person name="Schmutz J."/>
            <person name="Larimer F."/>
            <person name="Land M."/>
            <person name="Hauser L."/>
            <person name="Kyrpides N."/>
            <person name="Kim E."/>
            <person name="Zhao J.-S."/>
            <person name="Richardson P."/>
        </authorList>
    </citation>
    <scope>NUCLEOTIDE SEQUENCE [LARGE SCALE GENOMIC DNA]</scope>
    <source>
        <strain>HAW-EB3</strain>
    </source>
</reference>
<protein>
    <recommendedName>
        <fullName evidence="1">RNA polymerase-associated protein RapA</fullName>
        <ecNumber evidence="1">3.6.4.-</ecNumber>
    </recommendedName>
    <alternativeName>
        <fullName evidence="1">ATP-dependent helicase HepA</fullName>
    </alternativeName>
</protein>
<name>RAPA_SHESH</name>
<accession>A8FQW4</accession>
<proteinExistence type="inferred from homology"/>
<evidence type="ECO:0000255" key="1">
    <source>
        <dbReference type="HAMAP-Rule" id="MF_01821"/>
    </source>
</evidence>
<dbReference type="EC" id="3.6.4.-" evidence="1"/>
<dbReference type="EMBL" id="CP000821">
    <property type="protein sequence ID" value="ABV35237.1"/>
    <property type="molecule type" value="Genomic_DNA"/>
</dbReference>
<dbReference type="RefSeq" id="WP_012140974.1">
    <property type="nucleotide sequence ID" value="NC_009831.1"/>
</dbReference>
<dbReference type="SMR" id="A8FQW4"/>
<dbReference type="STRING" id="425104.Ssed_0625"/>
<dbReference type="KEGG" id="sse:Ssed_0625"/>
<dbReference type="eggNOG" id="COG0553">
    <property type="taxonomic scope" value="Bacteria"/>
</dbReference>
<dbReference type="HOGENOM" id="CLU_011520_0_0_6"/>
<dbReference type="OrthoDB" id="9814088at2"/>
<dbReference type="Proteomes" id="UP000002015">
    <property type="component" value="Chromosome"/>
</dbReference>
<dbReference type="GO" id="GO:0005524">
    <property type="term" value="F:ATP binding"/>
    <property type="evidence" value="ECO:0007669"/>
    <property type="project" value="UniProtKB-UniRule"/>
</dbReference>
<dbReference type="GO" id="GO:0003677">
    <property type="term" value="F:DNA binding"/>
    <property type="evidence" value="ECO:0007669"/>
    <property type="project" value="UniProtKB-KW"/>
</dbReference>
<dbReference type="GO" id="GO:0004386">
    <property type="term" value="F:helicase activity"/>
    <property type="evidence" value="ECO:0007669"/>
    <property type="project" value="UniProtKB-UniRule"/>
</dbReference>
<dbReference type="GO" id="GO:0016817">
    <property type="term" value="F:hydrolase activity, acting on acid anhydrides"/>
    <property type="evidence" value="ECO:0007669"/>
    <property type="project" value="InterPro"/>
</dbReference>
<dbReference type="GO" id="GO:0006355">
    <property type="term" value="P:regulation of DNA-templated transcription"/>
    <property type="evidence" value="ECO:0007669"/>
    <property type="project" value="UniProtKB-UniRule"/>
</dbReference>
<dbReference type="CDD" id="cd18011">
    <property type="entry name" value="DEXDc_RapA"/>
    <property type="match status" value="1"/>
</dbReference>
<dbReference type="CDD" id="cd18793">
    <property type="entry name" value="SF2_C_SNF"/>
    <property type="match status" value="1"/>
</dbReference>
<dbReference type="Gene3D" id="2.30.30.140">
    <property type="match status" value="1"/>
</dbReference>
<dbReference type="Gene3D" id="2.30.30.930">
    <property type="match status" value="1"/>
</dbReference>
<dbReference type="Gene3D" id="3.30.360.80">
    <property type="match status" value="1"/>
</dbReference>
<dbReference type="Gene3D" id="6.10.140.1500">
    <property type="match status" value="1"/>
</dbReference>
<dbReference type="Gene3D" id="6.10.140.2230">
    <property type="match status" value="1"/>
</dbReference>
<dbReference type="Gene3D" id="3.40.50.300">
    <property type="entry name" value="P-loop containing nucleotide triphosphate hydrolases"/>
    <property type="match status" value="1"/>
</dbReference>
<dbReference type="Gene3D" id="3.40.50.10810">
    <property type="entry name" value="Tandem AAA-ATPase domain"/>
    <property type="match status" value="1"/>
</dbReference>
<dbReference type="HAMAP" id="MF_01821">
    <property type="entry name" value="Helicase_RapA"/>
    <property type="match status" value="1"/>
</dbReference>
<dbReference type="InterPro" id="IPR014001">
    <property type="entry name" value="Helicase_ATP-bd"/>
</dbReference>
<dbReference type="InterPro" id="IPR001650">
    <property type="entry name" value="Helicase_C-like"/>
</dbReference>
<dbReference type="InterPro" id="IPR023949">
    <property type="entry name" value="Helicase_RapA"/>
</dbReference>
<dbReference type="InterPro" id="IPR027417">
    <property type="entry name" value="P-loop_NTPase"/>
</dbReference>
<dbReference type="InterPro" id="IPR022737">
    <property type="entry name" value="RapA_C"/>
</dbReference>
<dbReference type="InterPro" id="IPR038718">
    <property type="entry name" value="SNF2-like_sf"/>
</dbReference>
<dbReference type="InterPro" id="IPR049730">
    <property type="entry name" value="SNF2/RAD54-like_C"/>
</dbReference>
<dbReference type="InterPro" id="IPR000330">
    <property type="entry name" value="SNF2_N"/>
</dbReference>
<dbReference type="InterPro" id="IPR040765">
    <property type="entry name" value="Tudor_1_RapA"/>
</dbReference>
<dbReference type="InterPro" id="IPR040766">
    <property type="entry name" value="Tudor_2_RapA"/>
</dbReference>
<dbReference type="NCBIfam" id="NF003426">
    <property type="entry name" value="PRK04914.1"/>
    <property type="match status" value="1"/>
</dbReference>
<dbReference type="PANTHER" id="PTHR45766">
    <property type="entry name" value="DNA ANNEALING HELICASE AND ENDONUCLEASE ZRANB3 FAMILY MEMBER"/>
    <property type="match status" value="1"/>
</dbReference>
<dbReference type="PANTHER" id="PTHR45766:SF6">
    <property type="entry name" value="SWI_SNF-RELATED MATRIX-ASSOCIATED ACTIN-DEPENDENT REGULATOR OF CHROMATIN SUBFAMILY A-LIKE PROTEIN 1"/>
    <property type="match status" value="1"/>
</dbReference>
<dbReference type="Pfam" id="PF00271">
    <property type="entry name" value="Helicase_C"/>
    <property type="match status" value="1"/>
</dbReference>
<dbReference type="Pfam" id="PF12137">
    <property type="entry name" value="RapA_C"/>
    <property type="match status" value="1"/>
</dbReference>
<dbReference type="Pfam" id="PF00176">
    <property type="entry name" value="SNF2-rel_dom"/>
    <property type="match status" value="1"/>
</dbReference>
<dbReference type="Pfam" id="PF18339">
    <property type="entry name" value="Tudor_1_RapA"/>
    <property type="match status" value="1"/>
</dbReference>
<dbReference type="Pfam" id="PF18337">
    <property type="entry name" value="Tudor_RapA"/>
    <property type="match status" value="1"/>
</dbReference>
<dbReference type="SMART" id="SM00487">
    <property type="entry name" value="DEXDc"/>
    <property type="match status" value="1"/>
</dbReference>
<dbReference type="SMART" id="SM00490">
    <property type="entry name" value="HELICc"/>
    <property type="match status" value="1"/>
</dbReference>
<dbReference type="SUPFAM" id="SSF52540">
    <property type="entry name" value="P-loop containing nucleoside triphosphate hydrolases"/>
    <property type="match status" value="2"/>
</dbReference>
<dbReference type="PROSITE" id="PS51192">
    <property type="entry name" value="HELICASE_ATP_BIND_1"/>
    <property type="match status" value="1"/>
</dbReference>
<dbReference type="PROSITE" id="PS51194">
    <property type="entry name" value="HELICASE_CTER"/>
    <property type="match status" value="1"/>
</dbReference>
<comment type="function">
    <text evidence="1">Transcription regulator that activates transcription by stimulating RNA polymerase (RNAP) recycling in case of stress conditions such as supercoiled DNA or high salt concentrations. Probably acts by releasing the RNAP, when it is trapped or immobilized on tightly supercoiled DNA. Does not activate transcription on linear DNA. Probably not involved in DNA repair.</text>
</comment>
<comment type="subunit">
    <text evidence="1">Interacts with the RNAP. Has a higher affinity for the core RNAP than for the holoenzyme. Its ATPase activity is stimulated by binding to RNAP.</text>
</comment>
<comment type="similarity">
    <text evidence="1">Belongs to the SNF2/RAD54 helicase family. RapA subfamily.</text>
</comment>
<organism>
    <name type="scientific">Shewanella sediminis (strain HAW-EB3)</name>
    <dbReference type="NCBI Taxonomy" id="425104"/>
    <lineage>
        <taxon>Bacteria</taxon>
        <taxon>Pseudomonadati</taxon>
        <taxon>Pseudomonadota</taxon>
        <taxon>Gammaproteobacteria</taxon>
        <taxon>Alteromonadales</taxon>
        <taxon>Shewanellaceae</taxon>
        <taxon>Shewanella</taxon>
    </lineage>
</organism>
<gene>
    <name evidence="1" type="primary">rapA</name>
    <name type="ordered locus">Ssed_0625</name>
</gene>
<keyword id="KW-0010">Activator</keyword>
<keyword id="KW-0067">ATP-binding</keyword>
<keyword id="KW-0238">DNA-binding</keyword>
<keyword id="KW-0347">Helicase</keyword>
<keyword id="KW-0378">Hydrolase</keyword>
<keyword id="KW-0547">Nucleotide-binding</keyword>
<keyword id="KW-1185">Reference proteome</keyword>
<keyword id="KW-0804">Transcription</keyword>
<keyword id="KW-0805">Transcription regulation</keyword>
<sequence length="968" mass="109249">MPFSLGQRWISDTESELGLGTVVALEGRMVTLMFPATDENRLFSRTDAPLTRVIFNPGDKAESHEGWSLTVSEVEEKDNLIIYHGIHSETGEQASLRETLLNHNIRFNKPQDRLFAGQIDRLERFGVRYQCQLLRHKLATSDLLGLQGPRVGLIPHQQWIAHEVGRRFAPRVLLADEVGLGKTIEAGLIIHQQLLTGRAERILVIVPDTLRHQWLVEMLRRFNLKFSVFDEDRCIEAYADNDNPFYTEQLVICSLELLRKKKRLEQALDADWDLMVVDEAHHLEWTEDAPSRAYRVVEALSEVVPGVLLLTATPDQLGHQSHFARLRLLDPDRFYDYEAFLKEESSYKDVASAADALASGNKLPDDAINSLTELLSEKDITPSINVIQATDIDPDQQQDARDELLQELLDRHGTGRVLYRNSRASVKGFPTRIFNAYPQAMPSQYVTAARVGAMMNGHLDTQGKVKQALSPEKIYQDFDSNSASWWKFDPRVDWLINFLKENRRKKVLIIASQAETALSLEEALRTREGIQTTVFHEGMSIIERDKAGAYFAQETGGAQALICSEIGSEGRNFQFASQLILFDLPLNPDLLEQRIGRLDRIGQNNDVEIHVPYLEKTAQECLMQWYHKGLNAFEQTCPSGHILFSEFAEPLLDVLINQNDDSLTELLNHTQTRYKELKTVMEQGRDKLLEINSHGGERANKLVQSLAARDEDTQLIGSVIRLWDVIGVEQEDCGENAIVLNPSEHMMFPTYPGLPEDGITVTFDREMALSRDDIALITQEHPIVQTGLDLITSSETGTTSVAVLKNKALPAGTIFLELIYMADASAPKSSQLYRYLPPTPVRILLDKNGNNLSDNVTYESFNKQLSAVNRHIASKLVNASQTILHPLFAKGEEFAEVELKLLADSARAKMTSQLTLELERLEALKAVNPNIRDEELEHIREQMNELNGYLDGCLLQLDAIRLVLVSHA</sequence>